<reference key="1">
    <citation type="journal article" date="2010" name="Genome Biol. Evol.">
        <title>Continuing evolution of Burkholderia mallei through genome reduction and large-scale rearrangements.</title>
        <authorList>
            <person name="Losada L."/>
            <person name="Ronning C.M."/>
            <person name="DeShazer D."/>
            <person name="Woods D."/>
            <person name="Fedorova N."/>
            <person name="Kim H.S."/>
            <person name="Shabalina S.A."/>
            <person name="Pearson T.R."/>
            <person name="Brinkac L."/>
            <person name="Tan P."/>
            <person name="Nandi T."/>
            <person name="Crabtree J."/>
            <person name="Badger J."/>
            <person name="Beckstrom-Sternberg S."/>
            <person name="Saqib M."/>
            <person name="Schutzer S.E."/>
            <person name="Keim P."/>
            <person name="Nierman W.C."/>
        </authorList>
    </citation>
    <scope>NUCLEOTIDE SEQUENCE [LARGE SCALE GENOMIC DNA]</scope>
    <source>
        <strain>1106a</strain>
    </source>
</reference>
<keyword id="KW-0012">Acyltransferase</keyword>
<keyword id="KW-0963">Cytoplasm</keyword>
<keyword id="KW-0441">Lipid A biosynthesis</keyword>
<keyword id="KW-0444">Lipid biosynthesis</keyword>
<keyword id="KW-0443">Lipid metabolism</keyword>
<keyword id="KW-0677">Repeat</keyword>
<keyword id="KW-0808">Transferase</keyword>
<organism>
    <name type="scientific">Burkholderia pseudomallei (strain 1106a)</name>
    <dbReference type="NCBI Taxonomy" id="357348"/>
    <lineage>
        <taxon>Bacteria</taxon>
        <taxon>Pseudomonadati</taxon>
        <taxon>Pseudomonadota</taxon>
        <taxon>Betaproteobacteria</taxon>
        <taxon>Burkholderiales</taxon>
        <taxon>Burkholderiaceae</taxon>
        <taxon>Burkholderia</taxon>
        <taxon>pseudomallei group</taxon>
    </lineage>
</organism>
<proteinExistence type="inferred from homology"/>
<protein>
    <recommendedName>
        <fullName evidence="1">Acyl-[acyl-carrier-protein]--UDP-N-acetylglucosamine O-acyltransferase</fullName>
        <shortName evidence="1">UDP-N-acetylglucosamine acyltransferase</shortName>
        <ecNumber evidence="1">2.3.1.129</ecNumber>
    </recommendedName>
</protein>
<sequence>MSRIHPTAIIEPGAQLHETVEVGPYAIVGSHVTIGARTTIGSHSVIEGHTTIGEDNRIGHYASVGGRPQDMKYKDEPTRLVIGDRNTIREFTTIHTGTVQDTGVTTLGDDNWIMAYVHIGHDCRVGSHVILSSNAQMAGHVEIGDWAIVGGMSGVHQFVRIGAHSMLGGASALVQDIPPFVIAAGNKAEPHGINVEGLRRRGFSPDAISALRSAYRILYKNSLSLEEAKVQLSELAQAGGDGDAAVKSLVDFVESSQRGIIR</sequence>
<accession>A3NWL8</accession>
<feature type="chain" id="PRO_1000013155" description="Acyl-[acyl-carrier-protein]--UDP-N-acetylglucosamine O-acyltransferase">
    <location>
        <begin position="1"/>
        <end position="262"/>
    </location>
</feature>
<name>LPXA_BURP0</name>
<dbReference type="EC" id="2.3.1.129" evidence="1"/>
<dbReference type="EMBL" id="CP000572">
    <property type="protein sequence ID" value="ABN91066.1"/>
    <property type="molecule type" value="Genomic_DNA"/>
</dbReference>
<dbReference type="RefSeq" id="WP_004193051.1">
    <property type="nucleotide sequence ID" value="NC_009076.1"/>
</dbReference>
<dbReference type="SMR" id="A3NWL8"/>
<dbReference type="GeneID" id="93060688"/>
<dbReference type="KEGG" id="bpl:BURPS1106A_2480"/>
<dbReference type="HOGENOM" id="CLU_061249_0_0_4"/>
<dbReference type="UniPathway" id="UPA00359">
    <property type="reaction ID" value="UER00477"/>
</dbReference>
<dbReference type="Proteomes" id="UP000006738">
    <property type="component" value="Chromosome I"/>
</dbReference>
<dbReference type="GO" id="GO:0005737">
    <property type="term" value="C:cytoplasm"/>
    <property type="evidence" value="ECO:0007669"/>
    <property type="project" value="UniProtKB-SubCell"/>
</dbReference>
<dbReference type="GO" id="GO:0016020">
    <property type="term" value="C:membrane"/>
    <property type="evidence" value="ECO:0007669"/>
    <property type="project" value="GOC"/>
</dbReference>
<dbReference type="GO" id="GO:0008780">
    <property type="term" value="F:acyl-[acyl-carrier-protein]-UDP-N-acetylglucosamine O-acyltransferase activity"/>
    <property type="evidence" value="ECO:0007669"/>
    <property type="project" value="UniProtKB-UniRule"/>
</dbReference>
<dbReference type="GO" id="GO:0009245">
    <property type="term" value="P:lipid A biosynthetic process"/>
    <property type="evidence" value="ECO:0007669"/>
    <property type="project" value="UniProtKB-UniRule"/>
</dbReference>
<dbReference type="CDD" id="cd03351">
    <property type="entry name" value="LbH_UDP-GlcNAc_AT"/>
    <property type="match status" value="1"/>
</dbReference>
<dbReference type="Gene3D" id="2.160.10.10">
    <property type="entry name" value="Hexapeptide repeat proteins"/>
    <property type="match status" value="1"/>
</dbReference>
<dbReference type="Gene3D" id="1.20.1180.10">
    <property type="entry name" value="Udp N-acetylglucosamine O-acyltransferase, C-terminal domain"/>
    <property type="match status" value="1"/>
</dbReference>
<dbReference type="HAMAP" id="MF_00387">
    <property type="entry name" value="LpxA"/>
    <property type="match status" value="1"/>
</dbReference>
<dbReference type="InterPro" id="IPR029098">
    <property type="entry name" value="Acetyltransf_C"/>
</dbReference>
<dbReference type="InterPro" id="IPR037157">
    <property type="entry name" value="Acetyltransf_C_sf"/>
</dbReference>
<dbReference type="InterPro" id="IPR001451">
    <property type="entry name" value="Hexapep"/>
</dbReference>
<dbReference type="InterPro" id="IPR010137">
    <property type="entry name" value="Lipid_A_LpxA"/>
</dbReference>
<dbReference type="InterPro" id="IPR011004">
    <property type="entry name" value="Trimer_LpxA-like_sf"/>
</dbReference>
<dbReference type="NCBIfam" id="TIGR01852">
    <property type="entry name" value="lipid_A_lpxA"/>
    <property type="match status" value="1"/>
</dbReference>
<dbReference type="NCBIfam" id="NF003657">
    <property type="entry name" value="PRK05289.1"/>
    <property type="match status" value="1"/>
</dbReference>
<dbReference type="PANTHER" id="PTHR43480">
    <property type="entry name" value="ACYL-[ACYL-CARRIER-PROTEIN]--UDP-N-ACETYLGLUCOSAMINE O-ACYLTRANSFERASE"/>
    <property type="match status" value="1"/>
</dbReference>
<dbReference type="PANTHER" id="PTHR43480:SF1">
    <property type="entry name" value="ACYL-[ACYL-CARRIER-PROTEIN]--UDP-N-ACETYLGLUCOSAMINE O-ACYLTRANSFERASE, MITOCHONDRIAL-RELATED"/>
    <property type="match status" value="1"/>
</dbReference>
<dbReference type="Pfam" id="PF13720">
    <property type="entry name" value="Acetyltransf_11"/>
    <property type="match status" value="1"/>
</dbReference>
<dbReference type="Pfam" id="PF00132">
    <property type="entry name" value="Hexapep"/>
    <property type="match status" value="2"/>
</dbReference>
<dbReference type="PIRSF" id="PIRSF000456">
    <property type="entry name" value="UDP-GlcNAc_acltr"/>
    <property type="match status" value="1"/>
</dbReference>
<dbReference type="SUPFAM" id="SSF51161">
    <property type="entry name" value="Trimeric LpxA-like enzymes"/>
    <property type="match status" value="1"/>
</dbReference>
<dbReference type="PROSITE" id="PS00101">
    <property type="entry name" value="HEXAPEP_TRANSFERASES"/>
    <property type="match status" value="1"/>
</dbReference>
<comment type="function">
    <text evidence="1">Involved in the biosynthesis of lipid A, a phosphorylated glycolipid that anchors the lipopolysaccharide to the outer membrane of the cell.</text>
</comment>
<comment type="catalytic activity">
    <reaction evidence="1">
        <text>a (3R)-hydroxyacyl-[ACP] + UDP-N-acetyl-alpha-D-glucosamine = a UDP-3-O-[(3R)-3-hydroxyacyl]-N-acetyl-alpha-D-glucosamine + holo-[ACP]</text>
        <dbReference type="Rhea" id="RHEA:67812"/>
        <dbReference type="Rhea" id="RHEA-COMP:9685"/>
        <dbReference type="Rhea" id="RHEA-COMP:9945"/>
        <dbReference type="ChEBI" id="CHEBI:57705"/>
        <dbReference type="ChEBI" id="CHEBI:64479"/>
        <dbReference type="ChEBI" id="CHEBI:78827"/>
        <dbReference type="ChEBI" id="CHEBI:173225"/>
        <dbReference type="EC" id="2.3.1.129"/>
    </reaction>
</comment>
<comment type="pathway">
    <text evidence="1">Glycolipid biosynthesis; lipid IV(A) biosynthesis; lipid IV(A) from (3R)-3-hydroxytetradecanoyl-[acyl-carrier-protein] and UDP-N-acetyl-alpha-D-glucosamine: step 1/6.</text>
</comment>
<comment type="subunit">
    <text evidence="1">Homotrimer.</text>
</comment>
<comment type="subcellular location">
    <subcellularLocation>
        <location evidence="1">Cytoplasm</location>
    </subcellularLocation>
</comment>
<comment type="similarity">
    <text evidence="1">Belongs to the transferase hexapeptide repeat family. LpxA subfamily.</text>
</comment>
<evidence type="ECO:0000255" key="1">
    <source>
        <dbReference type="HAMAP-Rule" id="MF_00387"/>
    </source>
</evidence>
<gene>
    <name evidence="1" type="primary">lpxA</name>
    <name type="ordered locus">BURPS1106A_2480</name>
</gene>